<sequence length="513" mass="55200">MQLNSTEISELIKQRIAQFNVVSEAHNEGTIVSVSDGIIRVHGLADVMQGEMIALPGNRYAIALNLERDSVGAVVMGPYADLAEGMKVKCTGRILEVPVGRGLLGRVVNTLGEPIDGKGSIENDGFSAVEAIAPGVIERQSVDEPVQTGYKSVDAMIPIGRGQRELIIGDRQTGKTALAIDAIINQRDSGIKCVYVAIGQKASTVANVVRKLEEHDALANTIVVVATASESAALQYLAPYSGCAMGEYFRDRGEDALIIYDDLSKQAVAYRQISLLLRRPPGREAYPGDVFYLHSRLLERAARVNAEYVEAFTKGEVKGKTGSLTALPIIETQAGDVSAFVPTNVISITDGQIFLESSLFNAGIRPAVNPGISVSRVGGAAQTKIMKKLSGGIRTALAQYRELAAFSQFASDLDDATRKQLSHGQKVTELLKQKQYAPMSVAQQSLVLFAAERGYLGDVELAKVGSFEAALLAFADREHAELLQQINQTGAYNDEIEAKLKGILDTFKATQSW</sequence>
<feature type="chain" id="PRO_0000302716" description="ATP synthase subunit alpha">
    <location>
        <begin position="1"/>
        <end position="513"/>
    </location>
</feature>
<feature type="binding site" evidence="1">
    <location>
        <begin position="169"/>
        <end position="176"/>
    </location>
    <ligand>
        <name>ATP</name>
        <dbReference type="ChEBI" id="CHEBI:30616"/>
    </ligand>
</feature>
<feature type="site" description="Required for activity" evidence="1">
    <location>
        <position position="373"/>
    </location>
</feature>
<gene>
    <name evidence="1" type="primary">atpA</name>
    <name type="ordered locus">YPN_3980</name>
    <name type="ORF">YP516_4516</name>
</gene>
<comment type="function">
    <text evidence="1">Produces ATP from ADP in the presence of a proton gradient across the membrane. The alpha chain is a regulatory subunit.</text>
</comment>
<comment type="catalytic activity">
    <reaction evidence="1">
        <text>ATP + H2O + 4 H(+)(in) = ADP + phosphate + 5 H(+)(out)</text>
        <dbReference type="Rhea" id="RHEA:57720"/>
        <dbReference type="ChEBI" id="CHEBI:15377"/>
        <dbReference type="ChEBI" id="CHEBI:15378"/>
        <dbReference type="ChEBI" id="CHEBI:30616"/>
        <dbReference type="ChEBI" id="CHEBI:43474"/>
        <dbReference type="ChEBI" id="CHEBI:456216"/>
        <dbReference type="EC" id="7.1.2.2"/>
    </reaction>
</comment>
<comment type="subunit">
    <text evidence="1">F-type ATPases have 2 components, CF(1) - the catalytic core - and CF(0) - the membrane proton channel. CF(1) has five subunits: alpha(3), beta(3), gamma(1), delta(1), epsilon(1). CF(0) has three main subunits: a(1), b(2) and c(9-12). The alpha and beta chains form an alternating ring which encloses part of the gamma chain. CF(1) is attached to CF(0) by a central stalk formed by the gamma and epsilon chains, while a peripheral stalk is formed by the delta and b chains.</text>
</comment>
<comment type="subcellular location">
    <subcellularLocation>
        <location evidence="1">Cell inner membrane</location>
        <topology evidence="1">Peripheral membrane protein</topology>
    </subcellularLocation>
</comment>
<comment type="similarity">
    <text evidence="1">Belongs to the ATPase alpha/beta chains family.</text>
</comment>
<protein>
    <recommendedName>
        <fullName evidence="1">ATP synthase subunit alpha</fullName>
        <ecNumber evidence="1">7.1.2.2</ecNumber>
    </recommendedName>
    <alternativeName>
        <fullName evidence="1">ATP synthase F1 sector subunit alpha</fullName>
    </alternativeName>
    <alternativeName>
        <fullName evidence="1">F-ATPase subunit alpha</fullName>
    </alternativeName>
</protein>
<organism>
    <name type="scientific">Yersinia pestis bv. Antiqua (strain Nepal516)</name>
    <dbReference type="NCBI Taxonomy" id="377628"/>
    <lineage>
        <taxon>Bacteria</taxon>
        <taxon>Pseudomonadati</taxon>
        <taxon>Pseudomonadota</taxon>
        <taxon>Gammaproteobacteria</taxon>
        <taxon>Enterobacterales</taxon>
        <taxon>Yersiniaceae</taxon>
        <taxon>Yersinia</taxon>
    </lineage>
</organism>
<name>ATPA_YERPN</name>
<accession>Q1CCH3</accession>
<accession>D1Q303</accession>
<evidence type="ECO:0000255" key="1">
    <source>
        <dbReference type="HAMAP-Rule" id="MF_01346"/>
    </source>
</evidence>
<proteinExistence type="inferred from homology"/>
<dbReference type="EC" id="7.1.2.2" evidence="1"/>
<dbReference type="EMBL" id="CP000305">
    <property type="protein sequence ID" value="ABG20307.1"/>
    <property type="molecule type" value="Genomic_DNA"/>
</dbReference>
<dbReference type="EMBL" id="ACNQ01000019">
    <property type="protein sequence ID" value="EEO74906.1"/>
    <property type="molecule type" value="Genomic_DNA"/>
</dbReference>
<dbReference type="RefSeq" id="WP_002220758.1">
    <property type="nucleotide sequence ID" value="NZ_ACNQ01000019.1"/>
</dbReference>
<dbReference type="SMR" id="Q1CCH3"/>
<dbReference type="GeneID" id="96663461"/>
<dbReference type="KEGG" id="ypn:YPN_3980"/>
<dbReference type="HOGENOM" id="CLU_010091_2_1_6"/>
<dbReference type="Proteomes" id="UP000008936">
    <property type="component" value="Chromosome"/>
</dbReference>
<dbReference type="GO" id="GO:0005886">
    <property type="term" value="C:plasma membrane"/>
    <property type="evidence" value="ECO:0007669"/>
    <property type="project" value="UniProtKB-SubCell"/>
</dbReference>
<dbReference type="GO" id="GO:0045259">
    <property type="term" value="C:proton-transporting ATP synthase complex"/>
    <property type="evidence" value="ECO:0007669"/>
    <property type="project" value="UniProtKB-KW"/>
</dbReference>
<dbReference type="GO" id="GO:0043531">
    <property type="term" value="F:ADP binding"/>
    <property type="evidence" value="ECO:0007669"/>
    <property type="project" value="TreeGrafter"/>
</dbReference>
<dbReference type="GO" id="GO:0005524">
    <property type="term" value="F:ATP binding"/>
    <property type="evidence" value="ECO:0007669"/>
    <property type="project" value="UniProtKB-UniRule"/>
</dbReference>
<dbReference type="GO" id="GO:0046933">
    <property type="term" value="F:proton-transporting ATP synthase activity, rotational mechanism"/>
    <property type="evidence" value="ECO:0007669"/>
    <property type="project" value="UniProtKB-UniRule"/>
</dbReference>
<dbReference type="CDD" id="cd18113">
    <property type="entry name" value="ATP-synt_F1_alpha_C"/>
    <property type="match status" value="1"/>
</dbReference>
<dbReference type="CDD" id="cd18116">
    <property type="entry name" value="ATP-synt_F1_alpha_N"/>
    <property type="match status" value="1"/>
</dbReference>
<dbReference type="CDD" id="cd01132">
    <property type="entry name" value="F1-ATPase_alpha_CD"/>
    <property type="match status" value="1"/>
</dbReference>
<dbReference type="FunFam" id="1.20.150.20:FF:000001">
    <property type="entry name" value="ATP synthase subunit alpha"/>
    <property type="match status" value="1"/>
</dbReference>
<dbReference type="FunFam" id="2.40.30.20:FF:000001">
    <property type="entry name" value="ATP synthase subunit alpha"/>
    <property type="match status" value="1"/>
</dbReference>
<dbReference type="FunFam" id="3.40.50.300:FF:000002">
    <property type="entry name" value="ATP synthase subunit alpha"/>
    <property type="match status" value="1"/>
</dbReference>
<dbReference type="Gene3D" id="2.40.30.20">
    <property type="match status" value="1"/>
</dbReference>
<dbReference type="Gene3D" id="1.20.150.20">
    <property type="entry name" value="ATP synthase alpha/beta chain, C-terminal domain"/>
    <property type="match status" value="1"/>
</dbReference>
<dbReference type="Gene3D" id="3.40.50.300">
    <property type="entry name" value="P-loop containing nucleotide triphosphate hydrolases"/>
    <property type="match status" value="1"/>
</dbReference>
<dbReference type="HAMAP" id="MF_01346">
    <property type="entry name" value="ATP_synth_alpha_bact"/>
    <property type="match status" value="1"/>
</dbReference>
<dbReference type="InterPro" id="IPR023366">
    <property type="entry name" value="ATP_synth_asu-like_sf"/>
</dbReference>
<dbReference type="InterPro" id="IPR000793">
    <property type="entry name" value="ATP_synth_asu_C"/>
</dbReference>
<dbReference type="InterPro" id="IPR038376">
    <property type="entry name" value="ATP_synth_asu_C_sf"/>
</dbReference>
<dbReference type="InterPro" id="IPR033732">
    <property type="entry name" value="ATP_synth_F1_a_nt-bd_dom"/>
</dbReference>
<dbReference type="InterPro" id="IPR005294">
    <property type="entry name" value="ATP_synth_F1_asu"/>
</dbReference>
<dbReference type="InterPro" id="IPR020003">
    <property type="entry name" value="ATPase_a/bsu_AS"/>
</dbReference>
<dbReference type="InterPro" id="IPR004100">
    <property type="entry name" value="ATPase_F1/V1/A1_a/bsu_N"/>
</dbReference>
<dbReference type="InterPro" id="IPR036121">
    <property type="entry name" value="ATPase_F1/V1/A1_a/bsu_N_sf"/>
</dbReference>
<dbReference type="InterPro" id="IPR000194">
    <property type="entry name" value="ATPase_F1/V1/A1_a/bsu_nucl-bd"/>
</dbReference>
<dbReference type="InterPro" id="IPR027417">
    <property type="entry name" value="P-loop_NTPase"/>
</dbReference>
<dbReference type="NCBIfam" id="TIGR00962">
    <property type="entry name" value="atpA"/>
    <property type="match status" value="1"/>
</dbReference>
<dbReference type="NCBIfam" id="NF009884">
    <property type="entry name" value="PRK13343.1"/>
    <property type="match status" value="1"/>
</dbReference>
<dbReference type="PANTHER" id="PTHR48082">
    <property type="entry name" value="ATP SYNTHASE SUBUNIT ALPHA, MITOCHONDRIAL"/>
    <property type="match status" value="1"/>
</dbReference>
<dbReference type="PANTHER" id="PTHR48082:SF2">
    <property type="entry name" value="ATP SYNTHASE SUBUNIT ALPHA, MITOCHONDRIAL"/>
    <property type="match status" value="1"/>
</dbReference>
<dbReference type="Pfam" id="PF00006">
    <property type="entry name" value="ATP-synt_ab"/>
    <property type="match status" value="1"/>
</dbReference>
<dbReference type="Pfam" id="PF00306">
    <property type="entry name" value="ATP-synt_ab_C"/>
    <property type="match status" value="1"/>
</dbReference>
<dbReference type="Pfam" id="PF02874">
    <property type="entry name" value="ATP-synt_ab_N"/>
    <property type="match status" value="1"/>
</dbReference>
<dbReference type="SUPFAM" id="SSF47917">
    <property type="entry name" value="C-terminal domain of alpha and beta subunits of F1 ATP synthase"/>
    <property type="match status" value="1"/>
</dbReference>
<dbReference type="SUPFAM" id="SSF50615">
    <property type="entry name" value="N-terminal domain of alpha and beta subunits of F1 ATP synthase"/>
    <property type="match status" value="1"/>
</dbReference>
<dbReference type="SUPFAM" id="SSF52540">
    <property type="entry name" value="P-loop containing nucleoside triphosphate hydrolases"/>
    <property type="match status" value="1"/>
</dbReference>
<dbReference type="PROSITE" id="PS00152">
    <property type="entry name" value="ATPASE_ALPHA_BETA"/>
    <property type="match status" value="1"/>
</dbReference>
<keyword id="KW-0066">ATP synthesis</keyword>
<keyword id="KW-0067">ATP-binding</keyword>
<keyword id="KW-0997">Cell inner membrane</keyword>
<keyword id="KW-1003">Cell membrane</keyword>
<keyword id="KW-0139">CF(1)</keyword>
<keyword id="KW-0375">Hydrogen ion transport</keyword>
<keyword id="KW-0406">Ion transport</keyword>
<keyword id="KW-0472">Membrane</keyword>
<keyword id="KW-0547">Nucleotide-binding</keyword>
<keyword id="KW-1278">Translocase</keyword>
<keyword id="KW-0813">Transport</keyword>
<reference key="1">
    <citation type="journal article" date="2006" name="J. Bacteriol.">
        <title>Complete genome sequence of Yersinia pestis strains Antiqua and Nepal516: evidence of gene reduction in an emerging pathogen.</title>
        <authorList>
            <person name="Chain P.S.G."/>
            <person name="Hu P."/>
            <person name="Malfatti S.A."/>
            <person name="Radnedge L."/>
            <person name="Larimer F."/>
            <person name="Vergez L.M."/>
            <person name="Worsham P."/>
            <person name="Chu M.C."/>
            <person name="Andersen G.L."/>
        </authorList>
    </citation>
    <scope>NUCLEOTIDE SEQUENCE [LARGE SCALE GENOMIC DNA]</scope>
    <source>
        <strain>Nepal516</strain>
    </source>
</reference>
<reference key="2">
    <citation type="submission" date="2009-04" db="EMBL/GenBank/DDBJ databases">
        <title>Yersinia pestis Nepal516A whole genome shotgun sequencing project.</title>
        <authorList>
            <person name="Plunkett G. III"/>
            <person name="Anderson B.D."/>
            <person name="Baumler D.J."/>
            <person name="Burland V."/>
            <person name="Cabot E.L."/>
            <person name="Glasner J.D."/>
            <person name="Mau B."/>
            <person name="Neeno-Eckwall E."/>
            <person name="Perna N.T."/>
            <person name="Munk A.C."/>
            <person name="Tapia R."/>
            <person name="Green L.D."/>
            <person name="Rogers Y.C."/>
            <person name="Detter J.C."/>
            <person name="Bruce D.C."/>
            <person name="Brettin T.S."/>
        </authorList>
    </citation>
    <scope>NUCLEOTIDE SEQUENCE [LARGE SCALE GENOMIC DNA]</scope>
    <source>
        <strain>Nepal516</strain>
    </source>
</reference>